<comment type="function">
    <text evidence="1">Converts heme B (protoheme IX) to heme O by substitution of the vinyl group on carbon 2 of heme B porphyrin ring with a hydroxyethyl farnesyl side group.</text>
</comment>
<comment type="catalytic activity">
    <reaction evidence="1">
        <text>heme b + (2E,6E)-farnesyl diphosphate + H2O = Fe(II)-heme o + diphosphate</text>
        <dbReference type="Rhea" id="RHEA:28070"/>
        <dbReference type="ChEBI" id="CHEBI:15377"/>
        <dbReference type="ChEBI" id="CHEBI:33019"/>
        <dbReference type="ChEBI" id="CHEBI:60344"/>
        <dbReference type="ChEBI" id="CHEBI:60530"/>
        <dbReference type="ChEBI" id="CHEBI:175763"/>
        <dbReference type="EC" id="2.5.1.141"/>
    </reaction>
</comment>
<comment type="pathway">
    <text evidence="1">Porphyrin-containing compound metabolism; heme O biosynthesis; heme O from protoheme: step 1/1.</text>
</comment>
<comment type="subcellular location">
    <subcellularLocation>
        <location evidence="1">Cell inner membrane</location>
        <topology evidence="1">Multi-pass membrane protein</topology>
    </subcellularLocation>
</comment>
<comment type="miscellaneous">
    <text evidence="1">Carbon 2 of the heme B porphyrin ring is defined according to the Fischer nomenclature.</text>
</comment>
<comment type="similarity">
    <text evidence="1">Belongs to the UbiA prenyltransferase family. Protoheme IX farnesyltransferase subfamily.</text>
</comment>
<organism>
    <name type="scientific">Pseudomonas syringae pv. tomato (strain ATCC BAA-871 / DC3000)</name>
    <dbReference type="NCBI Taxonomy" id="223283"/>
    <lineage>
        <taxon>Bacteria</taxon>
        <taxon>Pseudomonadati</taxon>
        <taxon>Pseudomonadota</taxon>
        <taxon>Gammaproteobacteria</taxon>
        <taxon>Pseudomonadales</taxon>
        <taxon>Pseudomonadaceae</taxon>
        <taxon>Pseudomonas</taxon>
    </lineage>
</organism>
<keyword id="KW-0997">Cell inner membrane</keyword>
<keyword id="KW-1003">Cell membrane</keyword>
<keyword id="KW-0350">Heme biosynthesis</keyword>
<keyword id="KW-0472">Membrane</keyword>
<keyword id="KW-1185">Reference proteome</keyword>
<keyword id="KW-0808">Transferase</keyword>
<keyword id="KW-0812">Transmembrane</keyword>
<keyword id="KW-1133">Transmembrane helix</keyword>
<gene>
    <name evidence="1" type="primary">cyoE</name>
    <name type="ordered locus">PSPTO_1329</name>
</gene>
<accession>Q887G7</accession>
<proteinExistence type="inferred from homology"/>
<evidence type="ECO:0000255" key="1">
    <source>
        <dbReference type="HAMAP-Rule" id="MF_00154"/>
    </source>
</evidence>
<sequence length="295" mass="32388">MSLKHFIQITKPGIIFGNVLSVAGGFFLASKGNIDFGVFLAAVIGTSLVVASGCVFNNCIDRDIDQRMERTRNRVLVQGLVSLKLALLYATLLGIAGVALLYTEANPLAALFAVIGFVIYVGFYSLYLKRRSVHGTLVGSLSGAMPPVIGYCAVSNSFDFAALTLLVMFSLWQMPHSYAIAIFRFNDYRAAKIPVLPVQRGILVTKRHILLYILAFLVATLMLTVGGYAGLNYLAVAAGMGMYWLYMAWKGYKAVDDTVWARKLFVFSIFTITALSVMMSVDFQVTKELLVTYAF</sequence>
<protein>
    <recommendedName>
        <fullName evidence="1">Protoheme IX farnesyltransferase</fullName>
        <ecNumber evidence="1">2.5.1.141</ecNumber>
    </recommendedName>
    <alternativeName>
        <fullName evidence="1">Heme B farnesyltransferase</fullName>
    </alternativeName>
    <alternativeName>
        <fullName evidence="1">Heme O synthase</fullName>
    </alternativeName>
</protein>
<dbReference type="EC" id="2.5.1.141" evidence="1"/>
<dbReference type="EMBL" id="AE016853">
    <property type="protein sequence ID" value="AAO54851.1"/>
    <property type="molecule type" value="Genomic_DNA"/>
</dbReference>
<dbReference type="RefSeq" id="NP_791156.1">
    <property type="nucleotide sequence ID" value="NC_004578.1"/>
</dbReference>
<dbReference type="RefSeq" id="WP_003375846.1">
    <property type="nucleotide sequence ID" value="NC_004578.1"/>
</dbReference>
<dbReference type="SMR" id="Q887G7"/>
<dbReference type="STRING" id="223283.PSPTO_1329"/>
<dbReference type="GeneID" id="61790901"/>
<dbReference type="KEGG" id="pst:PSPTO_1329"/>
<dbReference type="PATRIC" id="fig|223283.9.peg.1351"/>
<dbReference type="eggNOG" id="COG0109">
    <property type="taxonomic scope" value="Bacteria"/>
</dbReference>
<dbReference type="HOGENOM" id="CLU_029631_0_0_6"/>
<dbReference type="OrthoDB" id="9814417at2"/>
<dbReference type="PhylomeDB" id="Q887G7"/>
<dbReference type="UniPathway" id="UPA00834">
    <property type="reaction ID" value="UER00712"/>
</dbReference>
<dbReference type="Proteomes" id="UP000002515">
    <property type="component" value="Chromosome"/>
</dbReference>
<dbReference type="GO" id="GO:0005886">
    <property type="term" value="C:plasma membrane"/>
    <property type="evidence" value="ECO:0007669"/>
    <property type="project" value="UniProtKB-SubCell"/>
</dbReference>
<dbReference type="GO" id="GO:0008495">
    <property type="term" value="F:protoheme IX farnesyltransferase activity"/>
    <property type="evidence" value="ECO:0007669"/>
    <property type="project" value="UniProtKB-UniRule"/>
</dbReference>
<dbReference type="GO" id="GO:0048034">
    <property type="term" value="P:heme O biosynthetic process"/>
    <property type="evidence" value="ECO:0007669"/>
    <property type="project" value="UniProtKB-UniRule"/>
</dbReference>
<dbReference type="CDD" id="cd13957">
    <property type="entry name" value="PT_UbiA_Cox10"/>
    <property type="match status" value="1"/>
</dbReference>
<dbReference type="FunFam" id="1.10.357.140:FF:000001">
    <property type="entry name" value="Protoheme IX farnesyltransferase"/>
    <property type="match status" value="1"/>
</dbReference>
<dbReference type="Gene3D" id="1.10.357.140">
    <property type="entry name" value="UbiA prenyltransferase"/>
    <property type="match status" value="1"/>
</dbReference>
<dbReference type="HAMAP" id="MF_00154">
    <property type="entry name" value="CyoE_CtaB"/>
    <property type="match status" value="1"/>
</dbReference>
<dbReference type="InterPro" id="IPR006369">
    <property type="entry name" value="Protohaem_IX_farnesylTrfase"/>
</dbReference>
<dbReference type="InterPro" id="IPR000537">
    <property type="entry name" value="UbiA_prenyltransferase"/>
</dbReference>
<dbReference type="InterPro" id="IPR030470">
    <property type="entry name" value="UbiA_prenylTrfase_CS"/>
</dbReference>
<dbReference type="InterPro" id="IPR044878">
    <property type="entry name" value="UbiA_sf"/>
</dbReference>
<dbReference type="NCBIfam" id="TIGR01473">
    <property type="entry name" value="cyoE_ctaB"/>
    <property type="match status" value="1"/>
</dbReference>
<dbReference type="NCBIfam" id="NF003348">
    <property type="entry name" value="PRK04375.1-1"/>
    <property type="match status" value="1"/>
</dbReference>
<dbReference type="PANTHER" id="PTHR43448">
    <property type="entry name" value="PROTOHEME IX FARNESYLTRANSFERASE, MITOCHONDRIAL"/>
    <property type="match status" value="1"/>
</dbReference>
<dbReference type="PANTHER" id="PTHR43448:SF2">
    <property type="entry name" value="PROTOHEME IX FARNESYLTRANSFERASE, MITOCHONDRIAL"/>
    <property type="match status" value="1"/>
</dbReference>
<dbReference type="Pfam" id="PF01040">
    <property type="entry name" value="UbiA"/>
    <property type="match status" value="1"/>
</dbReference>
<dbReference type="PROSITE" id="PS00943">
    <property type="entry name" value="UBIA"/>
    <property type="match status" value="1"/>
</dbReference>
<name>CYOE_PSESM</name>
<reference key="1">
    <citation type="journal article" date="2003" name="Proc. Natl. Acad. Sci. U.S.A.">
        <title>The complete genome sequence of the Arabidopsis and tomato pathogen Pseudomonas syringae pv. tomato DC3000.</title>
        <authorList>
            <person name="Buell C.R."/>
            <person name="Joardar V."/>
            <person name="Lindeberg M."/>
            <person name="Selengut J."/>
            <person name="Paulsen I.T."/>
            <person name="Gwinn M.L."/>
            <person name="Dodson R.J."/>
            <person name="DeBoy R.T."/>
            <person name="Durkin A.S."/>
            <person name="Kolonay J.F."/>
            <person name="Madupu R."/>
            <person name="Daugherty S.C."/>
            <person name="Brinkac L.M."/>
            <person name="Beanan M.J."/>
            <person name="Haft D.H."/>
            <person name="Nelson W.C."/>
            <person name="Davidsen T.M."/>
            <person name="Zafar N."/>
            <person name="Zhou L."/>
            <person name="Liu J."/>
            <person name="Yuan Q."/>
            <person name="Khouri H.M."/>
            <person name="Fedorova N.B."/>
            <person name="Tran B."/>
            <person name="Russell D."/>
            <person name="Berry K.J."/>
            <person name="Utterback T.R."/>
            <person name="Van Aken S.E."/>
            <person name="Feldblyum T.V."/>
            <person name="D'Ascenzo M."/>
            <person name="Deng W.-L."/>
            <person name="Ramos A.R."/>
            <person name="Alfano J.R."/>
            <person name="Cartinhour S."/>
            <person name="Chatterjee A.K."/>
            <person name="Delaney T.P."/>
            <person name="Lazarowitz S.G."/>
            <person name="Martin G.B."/>
            <person name="Schneider D.J."/>
            <person name="Tang X."/>
            <person name="Bender C.L."/>
            <person name="White O."/>
            <person name="Fraser C.M."/>
            <person name="Collmer A."/>
        </authorList>
    </citation>
    <scope>NUCLEOTIDE SEQUENCE [LARGE SCALE GENOMIC DNA]</scope>
    <source>
        <strain>ATCC BAA-871 / DC3000</strain>
    </source>
</reference>
<feature type="chain" id="PRO_0000326932" description="Protoheme IX farnesyltransferase">
    <location>
        <begin position="1"/>
        <end position="295"/>
    </location>
</feature>
<feature type="transmembrane region" description="Helical" evidence="1">
    <location>
        <begin position="9"/>
        <end position="29"/>
    </location>
</feature>
<feature type="transmembrane region" description="Helical" evidence="1">
    <location>
        <begin position="36"/>
        <end position="56"/>
    </location>
</feature>
<feature type="transmembrane region" description="Helical" evidence="1">
    <location>
        <begin position="80"/>
        <end position="100"/>
    </location>
</feature>
<feature type="transmembrane region" description="Helical" evidence="1">
    <location>
        <begin position="108"/>
        <end position="128"/>
    </location>
</feature>
<feature type="transmembrane region" description="Helical" evidence="1">
    <location>
        <begin position="135"/>
        <end position="155"/>
    </location>
</feature>
<feature type="transmembrane region" description="Helical" evidence="1">
    <location>
        <begin position="163"/>
        <end position="183"/>
    </location>
</feature>
<feature type="transmembrane region" description="Helical" evidence="1">
    <location>
        <begin position="209"/>
        <end position="229"/>
    </location>
</feature>
<feature type="transmembrane region" description="Helical" evidence="1">
    <location>
        <begin position="230"/>
        <end position="250"/>
    </location>
</feature>
<feature type="transmembrane region" description="Helical" evidence="1">
    <location>
        <begin position="265"/>
        <end position="285"/>
    </location>
</feature>